<sequence>MTINHFALNAVDRSAEVQGKGASRRLRKQNLVPAIIYGGGEQPIAISIKINELVKSLEFEAFFSHILTLNVDGEEHQVVIKDLQRHPAKGFPMHADFQRVVKGQKINMNVPVHFSGREEAPGTKAGGILSTLVTDIEIVCIPSQLPEYLEIDVSGMEIGDLFRLSDIKLPEGVIIFDLDMEDAHDRTIVNMQPPTVQEVDKVAEIDASDVPATEQGTDGNKDGK</sequence>
<proteinExistence type="inferred from homology"/>
<dbReference type="EMBL" id="CP000082">
    <property type="protein sequence ID" value="AAZ18044.1"/>
    <property type="molecule type" value="Genomic_DNA"/>
</dbReference>
<dbReference type="RefSeq" id="WP_011279483.1">
    <property type="nucleotide sequence ID" value="NC_007204.1"/>
</dbReference>
<dbReference type="SMR" id="Q4FVB4"/>
<dbReference type="STRING" id="259536.Psyc_0171"/>
<dbReference type="KEGG" id="par:Psyc_0171"/>
<dbReference type="eggNOG" id="COG1825">
    <property type="taxonomic scope" value="Bacteria"/>
</dbReference>
<dbReference type="HOGENOM" id="CLU_075939_0_1_6"/>
<dbReference type="OrthoDB" id="9806411at2"/>
<dbReference type="Proteomes" id="UP000000546">
    <property type="component" value="Chromosome"/>
</dbReference>
<dbReference type="GO" id="GO:0022625">
    <property type="term" value="C:cytosolic large ribosomal subunit"/>
    <property type="evidence" value="ECO:0007669"/>
    <property type="project" value="TreeGrafter"/>
</dbReference>
<dbReference type="GO" id="GO:0008097">
    <property type="term" value="F:5S rRNA binding"/>
    <property type="evidence" value="ECO:0007669"/>
    <property type="project" value="InterPro"/>
</dbReference>
<dbReference type="GO" id="GO:0003735">
    <property type="term" value="F:structural constituent of ribosome"/>
    <property type="evidence" value="ECO:0007669"/>
    <property type="project" value="InterPro"/>
</dbReference>
<dbReference type="GO" id="GO:0006412">
    <property type="term" value="P:translation"/>
    <property type="evidence" value="ECO:0007669"/>
    <property type="project" value="UniProtKB-UniRule"/>
</dbReference>
<dbReference type="CDD" id="cd00495">
    <property type="entry name" value="Ribosomal_L25_TL5_CTC"/>
    <property type="match status" value="1"/>
</dbReference>
<dbReference type="Gene3D" id="2.170.120.20">
    <property type="entry name" value="Ribosomal protein L25, beta domain"/>
    <property type="match status" value="1"/>
</dbReference>
<dbReference type="Gene3D" id="2.40.240.10">
    <property type="entry name" value="Ribosomal Protein L25, Chain P"/>
    <property type="match status" value="1"/>
</dbReference>
<dbReference type="HAMAP" id="MF_01336">
    <property type="entry name" value="Ribosomal_bL25"/>
    <property type="match status" value="1"/>
</dbReference>
<dbReference type="HAMAP" id="MF_01334">
    <property type="entry name" value="Ribosomal_bL25_CTC"/>
    <property type="match status" value="1"/>
</dbReference>
<dbReference type="InterPro" id="IPR020056">
    <property type="entry name" value="Rbsml_bL25/Gln-tRNA_synth_N"/>
</dbReference>
<dbReference type="InterPro" id="IPR011035">
    <property type="entry name" value="Ribosomal_bL25/Gln-tRNA_synth"/>
</dbReference>
<dbReference type="InterPro" id="IPR020057">
    <property type="entry name" value="Ribosomal_bL25_b-dom"/>
</dbReference>
<dbReference type="InterPro" id="IPR037121">
    <property type="entry name" value="Ribosomal_bL25_C"/>
</dbReference>
<dbReference type="InterPro" id="IPR001021">
    <property type="entry name" value="Ribosomal_bL25_long"/>
</dbReference>
<dbReference type="InterPro" id="IPR020055">
    <property type="entry name" value="Ribosomal_bL25_short"/>
</dbReference>
<dbReference type="InterPro" id="IPR029751">
    <property type="entry name" value="Ribosomal_L25_dom"/>
</dbReference>
<dbReference type="InterPro" id="IPR020930">
    <property type="entry name" value="Ribosomal_uL5_bac-type"/>
</dbReference>
<dbReference type="NCBIfam" id="TIGR00731">
    <property type="entry name" value="bL25_bact_ctc"/>
    <property type="match status" value="1"/>
</dbReference>
<dbReference type="NCBIfam" id="NF004128">
    <property type="entry name" value="PRK05618.1-2"/>
    <property type="match status" value="1"/>
</dbReference>
<dbReference type="NCBIfam" id="NF004130">
    <property type="entry name" value="PRK05618.1-5"/>
    <property type="match status" value="1"/>
</dbReference>
<dbReference type="NCBIfam" id="NF004612">
    <property type="entry name" value="PRK05943.1"/>
    <property type="match status" value="1"/>
</dbReference>
<dbReference type="PANTHER" id="PTHR33284">
    <property type="entry name" value="RIBOSOMAL PROTEIN L25/GLN-TRNA SYNTHETASE, ANTI-CODON-BINDING DOMAIN-CONTAINING PROTEIN"/>
    <property type="match status" value="1"/>
</dbReference>
<dbReference type="PANTHER" id="PTHR33284:SF1">
    <property type="entry name" value="RIBOSOMAL PROTEIN L25_GLN-TRNA SYNTHETASE, ANTI-CODON-BINDING DOMAIN-CONTAINING PROTEIN"/>
    <property type="match status" value="1"/>
</dbReference>
<dbReference type="Pfam" id="PF01386">
    <property type="entry name" value="Ribosomal_L25p"/>
    <property type="match status" value="1"/>
</dbReference>
<dbReference type="Pfam" id="PF14693">
    <property type="entry name" value="Ribosomal_TL5_C"/>
    <property type="match status" value="1"/>
</dbReference>
<dbReference type="SUPFAM" id="SSF50715">
    <property type="entry name" value="Ribosomal protein L25-like"/>
    <property type="match status" value="1"/>
</dbReference>
<reference key="1">
    <citation type="journal article" date="2010" name="Appl. Environ. Microbiol.">
        <title>The genome sequence of Psychrobacter arcticus 273-4, a psychroactive Siberian permafrost bacterium, reveals mechanisms for adaptation to low-temperature growth.</title>
        <authorList>
            <person name="Ayala-del-Rio H.L."/>
            <person name="Chain P.S."/>
            <person name="Grzymski J.J."/>
            <person name="Ponder M.A."/>
            <person name="Ivanova N."/>
            <person name="Bergholz P.W."/>
            <person name="Di Bartolo G."/>
            <person name="Hauser L."/>
            <person name="Land M."/>
            <person name="Bakermans C."/>
            <person name="Rodrigues D."/>
            <person name="Klappenbach J."/>
            <person name="Zarka D."/>
            <person name="Larimer F."/>
            <person name="Richardson P."/>
            <person name="Murray A."/>
            <person name="Thomashow M."/>
            <person name="Tiedje J.M."/>
        </authorList>
    </citation>
    <scope>NUCLEOTIDE SEQUENCE [LARGE SCALE GENOMIC DNA]</scope>
    <source>
        <strain>DSM 17307 / VKM B-2377 / 273-4</strain>
    </source>
</reference>
<keyword id="KW-1185">Reference proteome</keyword>
<keyword id="KW-0687">Ribonucleoprotein</keyword>
<keyword id="KW-0689">Ribosomal protein</keyword>
<keyword id="KW-0694">RNA-binding</keyword>
<keyword id="KW-0699">rRNA-binding</keyword>
<protein>
    <recommendedName>
        <fullName evidence="1">Large ribosomal subunit protein bL25</fullName>
    </recommendedName>
    <alternativeName>
        <fullName evidence="2">50S ribosomal protein L25</fullName>
    </alternativeName>
    <alternativeName>
        <fullName evidence="1">General stress protein CTC</fullName>
    </alternativeName>
</protein>
<evidence type="ECO:0000255" key="1">
    <source>
        <dbReference type="HAMAP-Rule" id="MF_01334"/>
    </source>
</evidence>
<evidence type="ECO:0000305" key="2"/>
<accession>Q4FVB4</accession>
<feature type="chain" id="PRO_0000244230" description="Large ribosomal subunit protein bL25">
    <location>
        <begin position="1"/>
        <end position="224"/>
    </location>
</feature>
<name>RL25_PSYA2</name>
<gene>
    <name evidence="1" type="primary">rplY</name>
    <name evidence="1" type="synonym">ctc</name>
    <name type="ordered locus">Psyc_0171</name>
</gene>
<comment type="function">
    <text evidence="1">This is one of the proteins that binds to the 5S RNA in the ribosome where it forms part of the central protuberance.</text>
</comment>
<comment type="subunit">
    <text evidence="1">Part of the 50S ribosomal subunit; part of the 5S rRNA/L5/L18/L25 subcomplex. Contacts the 5S rRNA. Binds to the 5S rRNA independently of L5 and L18.</text>
</comment>
<comment type="similarity">
    <text evidence="1">Belongs to the bacterial ribosomal protein bL25 family. CTC subfamily.</text>
</comment>
<organism>
    <name type="scientific">Psychrobacter arcticus (strain DSM 17307 / VKM B-2377 / 273-4)</name>
    <dbReference type="NCBI Taxonomy" id="259536"/>
    <lineage>
        <taxon>Bacteria</taxon>
        <taxon>Pseudomonadati</taxon>
        <taxon>Pseudomonadota</taxon>
        <taxon>Gammaproteobacteria</taxon>
        <taxon>Moraxellales</taxon>
        <taxon>Moraxellaceae</taxon>
        <taxon>Psychrobacter</taxon>
    </lineage>
</organism>